<keyword id="KW-1003">Cell membrane</keyword>
<keyword id="KW-0449">Lipoprotein</keyword>
<keyword id="KW-0472">Membrane</keyword>
<keyword id="KW-0564">Palmitate</keyword>
<keyword id="KW-0732">Signal</keyword>
<evidence type="ECO:0000255" key="1">
    <source>
        <dbReference type="PROSITE-ProRule" id="PRU00303"/>
    </source>
</evidence>
<evidence type="ECO:0000305" key="2"/>
<gene>
    <name type="ordered locus">SACOL0414</name>
</gene>
<reference key="1">
    <citation type="journal article" date="2005" name="J. Bacteriol.">
        <title>Insights on evolution of virulence and resistance from the complete genome analysis of an early methicillin-resistant Staphylococcus aureus strain and a biofilm-producing methicillin-resistant Staphylococcus epidermidis strain.</title>
        <authorList>
            <person name="Gill S.R."/>
            <person name="Fouts D.E."/>
            <person name="Archer G.L."/>
            <person name="Mongodin E.F."/>
            <person name="DeBoy R.T."/>
            <person name="Ravel J."/>
            <person name="Paulsen I.T."/>
            <person name="Kolonay J.F."/>
            <person name="Brinkac L.M."/>
            <person name="Beanan M.J."/>
            <person name="Dodson R.J."/>
            <person name="Daugherty S.C."/>
            <person name="Madupu R."/>
            <person name="Angiuoli S.V."/>
            <person name="Durkin A.S."/>
            <person name="Haft D.H."/>
            <person name="Vamathevan J.J."/>
            <person name="Khouri H."/>
            <person name="Utterback T.R."/>
            <person name="Lee C."/>
            <person name="Dimitrov G."/>
            <person name="Jiang L."/>
            <person name="Qin H."/>
            <person name="Weidman J."/>
            <person name="Tran K."/>
            <person name="Kang K.H."/>
            <person name="Hance I.R."/>
            <person name="Nelson K.E."/>
            <person name="Fraser C.M."/>
        </authorList>
    </citation>
    <scope>NUCLEOTIDE SEQUENCE [LARGE SCALE GENOMIC DNA]</scope>
    <source>
        <strain>COL</strain>
    </source>
</reference>
<sequence>MKKLTTLLLASTLLIAACGNDDSKKDDSKTSKKDDGVKAELKQATKAYDKYTDEQLNEFLKGTEKFVKAIENNDMAQAKALYPKVRMYYERSEPVAEAFGDLDPKIDARLADMKEEKKEKEWSGYHKIEKALYEDKKIDDVTKKDAQQLLKDAKELHAKADTLDITPKLMLQGSVDLLNEVATSKITGEEEIYSHTDLYDFKANVEGAQKIYDLFKPILEKKDKKLSDDIQMNFDKVNQLLDKYKDNNGGYESFEKVSKKDRKAFADAVNALGEPLSKMAVITE</sequence>
<organism>
    <name type="scientific">Staphylococcus aureus (strain COL)</name>
    <dbReference type="NCBI Taxonomy" id="93062"/>
    <lineage>
        <taxon>Bacteria</taxon>
        <taxon>Bacillati</taxon>
        <taxon>Bacillota</taxon>
        <taxon>Bacilli</taxon>
        <taxon>Bacillales</taxon>
        <taxon>Staphylococcaceae</taxon>
        <taxon>Staphylococcus</taxon>
    </lineage>
</organism>
<comment type="subcellular location">
    <subcellularLocation>
        <location evidence="1">Cell membrane</location>
        <topology evidence="1">Lipid-anchor</topology>
    </subcellularLocation>
</comment>
<comment type="similarity">
    <text evidence="2">Belongs to the EfeM/EfeO family.</text>
</comment>
<proteinExistence type="inferred from homology"/>
<name>EFEMO_STAAC</name>
<protein>
    <recommendedName>
        <fullName>Efem/EfeO family lipoprotein</fullName>
    </recommendedName>
</protein>
<accession>Q5HIV1</accession>
<dbReference type="EMBL" id="CP000046">
    <property type="protein sequence ID" value="AAW38883.1"/>
    <property type="molecule type" value="Genomic_DNA"/>
</dbReference>
<dbReference type="SMR" id="Q5HIV1"/>
<dbReference type="KEGG" id="sac:SACOL0414"/>
<dbReference type="HOGENOM" id="CLU_050342_0_1_9"/>
<dbReference type="Proteomes" id="UP000000530">
    <property type="component" value="Chromosome"/>
</dbReference>
<dbReference type="GO" id="GO:0005886">
    <property type="term" value="C:plasma membrane"/>
    <property type="evidence" value="ECO:0007669"/>
    <property type="project" value="UniProtKB-SubCell"/>
</dbReference>
<dbReference type="CDD" id="cd14656">
    <property type="entry name" value="Imelysin-like_EfeO"/>
    <property type="match status" value="1"/>
</dbReference>
<dbReference type="Gene3D" id="1.20.1420.20">
    <property type="entry name" value="M75 peptidase, HXXE motif"/>
    <property type="match status" value="1"/>
</dbReference>
<dbReference type="InterPro" id="IPR050894">
    <property type="entry name" value="EfeM/EfeO_iron_uptake"/>
</dbReference>
<dbReference type="InterPro" id="IPR018976">
    <property type="entry name" value="Imelysin-like"/>
</dbReference>
<dbReference type="InterPro" id="IPR034981">
    <property type="entry name" value="Imelysin-like_EfeO/Algp7"/>
</dbReference>
<dbReference type="InterPro" id="IPR038352">
    <property type="entry name" value="Imelysin_sf"/>
</dbReference>
<dbReference type="InterPro" id="IPR053377">
    <property type="entry name" value="Iron_uptake_EfeM/EfeO"/>
</dbReference>
<dbReference type="NCBIfam" id="NF041757">
    <property type="entry name" value="EfeO"/>
    <property type="match status" value="1"/>
</dbReference>
<dbReference type="PANTHER" id="PTHR39192">
    <property type="entry name" value="IRON UPTAKE SYSTEM COMPONENT EFEO"/>
    <property type="match status" value="1"/>
</dbReference>
<dbReference type="PANTHER" id="PTHR39192:SF1">
    <property type="entry name" value="IRON UPTAKE SYSTEM COMPONENT EFEO"/>
    <property type="match status" value="1"/>
</dbReference>
<dbReference type="Pfam" id="PF09375">
    <property type="entry name" value="Peptidase_M75"/>
    <property type="match status" value="1"/>
</dbReference>
<dbReference type="PROSITE" id="PS51257">
    <property type="entry name" value="PROKAR_LIPOPROTEIN"/>
    <property type="match status" value="1"/>
</dbReference>
<feature type="signal peptide" evidence="1">
    <location>
        <begin position="1"/>
        <end position="17"/>
    </location>
</feature>
<feature type="chain" id="PRO_0000278310" description="Efem/EfeO family lipoprotein">
    <location>
        <begin position="18"/>
        <end position="284"/>
    </location>
</feature>
<feature type="lipid moiety-binding region" description="N-palmitoyl cysteine" evidence="1">
    <location>
        <position position="18"/>
    </location>
</feature>
<feature type="lipid moiety-binding region" description="S-diacylglycerol cysteine" evidence="1">
    <location>
        <position position="18"/>
    </location>
</feature>